<proteinExistence type="inferred from homology"/>
<sequence length="133" mass="15096">MVFVNPLANALTSIYNNEMRRNKQAIIMPASKLVINVLRVMQKEGYVGEFEYIDDGRWGKITVQLLGRVNKCGPITPRYPLSYRQMIALPDYIRRYLPSKEIGIIIVSTSKGVMSHKEAARMRLGGVALGYVY</sequence>
<gene>
    <name evidence="1" type="primary">rps8</name>
    <name type="ordered locus">M1627_1485</name>
</gene>
<keyword id="KW-0687">Ribonucleoprotein</keyword>
<keyword id="KW-0689">Ribosomal protein</keyword>
<keyword id="KW-0694">RNA-binding</keyword>
<keyword id="KW-0699">rRNA-binding</keyword>
<reference key="1">
    <citation type="journal article" date="2009" name="Proc. Natl. Acad. Sci. U.S.A.">
        <title>Biogeography of the Sulfolobus islandicus pan-genome.</title>
        <authorList>
            <person name="Reno M.L."/>
            <person name="Held N.L."/>
            <person name="Fields C.J."/>
            <person name="Burke P.V."/>
            <person name="Whitaker R.J."/>
        </authorList>
    </citation>
    <scope>NUCLEOTIDE SEQUENCE [LARGE SCALE GENOMIC DNA]</scope>
    <source>
        <strain>M.16.27</strain>
    </source>
</reference>
<name>RS8_SACI3</name>
<protein>
    <recommendedName>
        <fullName evidence="1">Small ribosomal subunit protein uS8</fullName>
    </recommendedName>
    <alternativeName>
        <fullName evidence="2">30S ribosomal protein S8</fullName>
    </alternativeName>
</protein>
<evidence type="ECO:0000255" key="1">
    <source>
        <dbReference type="HAMAP-Rule" id="MF_01302"/>
    </source>
</evidence>
<evidence type="ECO:0000305" key="2"/>
<dbReference type="EMBL" id="CP001401">
    <property type="protein sequence ID" value="ACP55367.1"/>
    <property type="molecule type" value="Genomic_DNA"/>
</dbReference>
<dbReference type="RefSeq" id="WP_012711433.1">
    <property type="nucleotide sequence ID" value="NC_012632.1"/>
</dbReference>
<dbReference type="SMR" id="C3N5U2"/>
<dbReference type="KEGG" id="sim:M1627_1485"/>
<dbReference type="HOGENOM" id="CLU_098428_1_1_2"/>
<dbReference type="Proteomes" id="UP000002307">
    <property type="component" value="Chromosome"/>
</dbReference>
<dbReference type="GO" id="GO:1990904">
    <property type="term" value="C:ribonucleoprotein complex"/>
    <property type="evidence" value="ECO:0007669"/>
    <property type="project" value="UniProtKB-KW"/>
</dbReference>
<dbReference type="GO" id="GO:0005840">
    <property type="term" value="C:ribosome"/>
    <property type="evidence" value="ECO:0007669"/>
    <property type="project" value="UniProtKB-KW"/>
</dbReference>
<dbReference type="GO" id="GO:0019843">
    <property type="term" value="F:rRNA binding"/>
    <property type="evidence" value="ECO:0007669"/>
    <property type="project" value="UniProtKB-UniRule"/>
</dbReference>
<dbReference type="GO" id="GO:0003735">
    <property type="term" value="F:structural constituent of ribosome"/>
    <property type="evidence" value="ECO:0007669"/>
    <property type="project" value="InterPro"/>
</dbReference>
<dbReference type="GO" id="GO:0006412">
    <property type="term" value="P:translation"/>
    <property type="evidence" value="ECO:0007669"/>
    <property type="project" value="UniProtKB-UniRule"/>
</dbReference>
<dbReference type="FunFam" id="3.30.1370.30:FF:000001">
    <property type="entry name" value="40S ribosomal protein S15a"/>
    <property type="match status" value="1"/>
</dbReference>
<dbReference type="Gene3D" id="3.30.1370.30">
    <property type="match status" value="1"/>
</dbReference>
<dbReference type="Gene3D" id="3.30.1490.10">
    <property type="match status" value="1"/>
</dbReference>
<dbReference type="HAMAP" id="MF_01302_A">
    <property type="entry name" value="Ribosomal_uS8_A"/>
    <property type="match status" value="1"/>
</dbReference>
<dbReference type="InterPro" id="IPR000630">
    <property type="entry name" value="Ribosomal_uS8"/>
</dbReference>
<dbReference type="InterPro" id="IPR047863">
    <property type="entry name" value="Ribosomal_uS8_CS"/>
</dbReference>
<dbReference type="InterPro" id="IPR035987">
    <property type="entry name" value="Ribosomal_uS8_sf"/>
</dbReference>
<dbReference type="NCBIfam" id="NF003115">
    <property type="entry name" value="PRK04034.1"/>
    <property type="match status" value="1"/>
</dbReference>
<dbReference type="PANTHER" id="PTHR11758">
    <property type="entry name" value="40S RIBOSOMAL PROTEIN S15A"/>
    <property type="match status" value="1"/>
</dbReference>
<dbReference type="Pfam" id="PF00410">
    <property type="entry name" value="Ribosomal_S8"/>
    <property type="match status" value="1"/>
</dbReference>
<dbReference type="SUPFAM" id="SSF56047">
    <property type="entry name" value="Ribosomal protein S8"/>
    <property type="match status" value="1"/>
</dbReference>
<dbReference type="PROSITE" id="PS00053">
    <property type="entry name" value="RIBOSOMAL_S8"/>
    <property type="match status" value="1"/>
</dbReference>
<organism>
    <name type="scientific">Saccharolobus islandicus (strain M.16.27)</name>
    <name type="common">Sulfolobus islandicus</name>
    <dbReference type="NCBI Taxonomy" id="427318"/>
    <lineage>
        <taxon>Archaea</taxon>
        <taxon>Thermoproteota</taxon>
        <taxon>Thermoprotei</taxon>
        <taxon>Sulfolobales</taxon>
        <taxon>Sulfolobaceae</taxon>
        <taxon>Saccharolobus</taxon>
    </lineage>
</organism>
<comment type="function">
    <text evidence="1">One of the primary rRNA binding proteins, it binds directly to 16S rRNA central domain where it helps coordinate assembly of the platform of the 30S subunit.</text>
</comment>
<comment type="subunit">
    <text evidence="1">Part of the 30S ribosomal subunit.</text>
</comment>
<comment type="similarity">
    <text evidence="1">Belongs to the universal ribosomal protein uS8 family.</text>
</comment>
<accession>C3N5U2</accession>
<feature type="chain" id="PRO_1000214266" description="Small ribosomal subunit protein uS8">
    <location>
        <begin position="1"/>
        <end position="133"/>
    </location>
</feature>